<protein>
    <recommendedName>
        <fullName evidence="1">Large ribosomal subunit protein uL10</fullName>
    </recommendedName>
    <alternativeName>
        <fullName evidence="2">50S ribosomal protein L10</fullName>
    </alternativeName>
</protein>
<name>RL10_DEIDV</name>
<comment type="function">
    <text evidence="1">Forms part of the ribosomal stalk, playing a central role in the interaction of the ribosome with GTP-bound translation factors.</text>
</comment>
<comment type="subunit">
    <text evidence="1">Part of the ribosomal stalk of the 50S ribosomal subunit. The N-terminus interacts with L11 and the large rRNA to form the base of the stalk. The C-terminus forms an elongated spine to which L12 dimers bind in a sequential fashion forming a multimeric L10(L12)X complex.</text>
</comment>
<comment type="similarity">
    <text evidence="1">Belongs to the universal ribosomal protein uL10 family.</text>
</comment>
<organism>
    <name type="scientific">Deinococcus deserti (strain DSM 17065 / CIP 109153 / LMG 22923 / VCD115)</name>
    <dbReference type="NCBI Taxonomy" id="546414"/>
    <lineage>
        <taxon>Bacteria</taxon>
        <taxon>Thermotogati</taxon>
        <taxon>Deinococcota</taxon>
        <taxon>Deinococci</taxon>
        <taxon>Deinococcales</taxon>
        <taxon>Deinococcaceae</taxon>
        <taxon>Deinococcus</taxon>
    </lineage>
</organism>
<evidence type="ECO:0000255" key="1">
    <source>
        <dbReference type="HAMAP-Rule" id="MF_00362"/>
    </source>
</evidence>
<evidence type="ECO:0000305" key="2"/>
<accession>C1D0S4</accession>
<sequence>MANAKNQQTLSSLQGSLQGIETFYVVNYQGLTAGQLSELRKSIREKGGQLIVAKNTLINLALQDGGRDFGDALKGPSALVLAHEDPAGVAKALSDAAKKNDKGIPAIKGGFVEGNKVDVKVVERLASLGSKQSLQAEMVGVLSAHLSNFVGILEAYREKLEGENA</sequence>
<proteinExistence type="inferred from homology"/>
<dbReference type="EMBL" id="CP001114">
    <property type="protein sequence ID" value="ACO45448.1"/>
    <property type="molecule type" value="Genomic_DNA"/>
</dbReference>
<dbReference type="RefSeq" id="WP_012692571.1">
    <property type="nucleotide sequence ID" value="NC_012526.1"/>
</dbReference>
<dbReference type="SMR" id="C1D0S4"/>
<dbReference type="STRING" id="546414.Deide_06060"/>
<dbReference type="PaxDb" id="546414-Deide_06060"/>
<dbReference type="KEGG" id="ddr:Deide_06060"/>
<dbReference type="eggNOG" id="COG0244">
    <property type="taxonomic scope" value="Bacteria"/>
</dbReference>
<dbReference type="HOGENOM" id="CLU_092227_1_2_0"/>
<dbReference type="OrthoDB" id="9808307at2"/>
<dbReference type="Proteomes" id="UP000002208">
    <property type="component" value="Chromosome"/>
</dbReference>
<dbReference type="GO" id="GO:0015934">
    <property type="term" value="C:large ribosomal subunit"/>
    <property type="evidence" value="ECO:0007669"/>
    <property type="project" value="InterPro"/>
</dbReference>
<dbReference type="GO" id="GO:0070180">
    <property type="term" value="F:large ribosomal subunit rRNA binding"/>
    <property type="evidence" value="ECO:0007669"/>
    <property type="project" value="UniProtKB-UniRule"/>
</dbReference>
<dbReference type="GO" id="GO:0003735">
    <property type="term" value="F:structural constituent of ribosome"/>
    <property type="evidence" value="ECO:0007669"/>
    <property type="project" value="InterPro"/>
</dbReference>
<dbReference type="GO" id="GO:0006412">
    <property type="term" value="P:translation"/>
    <property type="evidence" value="ECO:0007669"/>
    <property type="project" value="UniProtKB-UniRule"/>
</dbReference>
<dbReference type="CDD" id="cd05797">
    <property type="entry name" value="Ribosomal_L10"/>
    <property type="match status" value="1"/>
</dbReference>
<dbReference type="Gene3D" id="3.30.70.1730">
    <property type="match status" value="1"/>
</dbReference>
<dbReference type="HAMAP" id="MF_00362">
    <property type="entry name" value="Ribosomal_uL10"/>
    <property type="match status" value="1"/>
</dbReference>
<dbReference type="InterPro" id="IPR001790">
    <property type="entry name" value="Ribosomal_uL10"/>
</dbReference>
<dbReference type="InterPro" id="IPR043141">
    <property type="entry name" value="Ribosomal_uL10-like_sf"/>
</dbReference>
<dbReference type="InterPro" id="IPR022973">
    <property type="entry name" value="Ribosomal_uL10_bac"/>
</dbReference>
<dbReference type="InterPro" id="IPR047865">
    <property type="entry name" value="Ribosomal_uL10_bac_type"/>
</dbReference>
<dbReference type="InterPro" id="IPR002363">
    <property type="entry name" value="Ribosomal_uL10_CS_bac"/>
</dbReference>
<dbReference type="NCBIfam" id="NF000955">
    <property type="entry name" value="PRK00099.1-1"/>
    <property type="match status" value="1"/>
</dbReference>
<dbReference type="PANTHER" id="PTHR11560">
    <property type="entry name" value="39S RIBOSOMAL PROTEIN L10, MITOCHONDRIAL"/>
    <property type="match status" value="1"/>
</dbReference>
<dbReference type="Pfam" id="PF00466">
    <property type="entry name" value="Ribosomal_L10"/>
    <property type="match status" value="1"/>
</dbReference>
<dbReference type="SUPFAM" id="SSF160369">
    <property type="entry name" value="Ribosomal protein L10-like"/>
    <property type="match status" value="1"/>
</dbReference>
<dbReference type="PROSITE" id="PS01109">
    <property type="entry name" value="RIBOSOMAL_L10"/>
    <property type="match status" value="1"/>
</dbReference>
<reference key="1">
    <citation type="journal article" date="2009" name="PLoS Genet.">
        <title>Alliance of proteomics and genomics to unravel the specificities of Sahara bacterium Deinococcus deserti.</title>
        <authorList>
            <person name="de Groot A."/>
            <person name="Dulermo R."/>
            <person name="Ortet P."/>
            <person name="Blanchard L."/>
            <person name="Guerin P."/>
            <person name="Fernandez B."/>
            <person name="Vacherie B."/>
            <person name="Dossat C."/>
            <person name="Jolivet E."/>
            <person name="Siguier P."/>
            <person name="Chandler M."/>
            <person name="Barakat M."/>
            <person name="Dedieu A."/>
            <person name="Barbe V."/>
            <person name="Heulin T."/>
            <person name="Sommer S."/>
            <person name="Achouak W."/>
            <person name="Armengaud J."/>
        </authorList>
    </citation>
    <scope>NUCLEOTIDE SEQUENCE [LARGE SCALE GENOMIC DNA]</scope>
    <source>
        <strain>DSM 17065 / CIP 109153 / LMG 22923 / VCD115</strain>
    </source>
</reference>
<feature type="chain" id="PRO_1000205438" description="Large ribosomal subunit protein uL10">
    <location>
        <begin position="1"/>
        <end position="165"/>
    </location>
</feature>
<keyword id="KW-1185">Reference proteome</keyword>
<keyword id="KW-0687">Ribonucleoprotein</keyword>
<keyword id="KW-0689">Ribosomal protein</keyword>
<keyword id="KW-0694">RNA-binding</keyword>
<keyword id="KW-0699">rRNA-binding</keyword>
<gene>
    <name evidence="1" type="primary">rplJ</name>
    <name type="ordered locus">Deide_06060</name>
</gene>